<dbReference type="EC" id="2.7.11.1" evidence="7"/>
<dbReference type="EMBL" id="KE138832">
    <property type="protein sequence ID" value="EPT28124.1"/>
    <property type="molecule type" value="Genomic_DNA"/>
</dbReference>
<dbReference type="RefSeq" id="XP_018636483.1">
    <property type="nucleotide sequence ID" value="XM_018782159.1"/>
</dbReference>
<dbReference type="EnsemblProtists" id="TGME49_292140-t26_1">
    <property type="protein sequence ID" value="TGME49_292140-t26_1"/>
    <property type="gene ID" value="TGME49_292140"/>
</dbReference>
<dbReference type="GeneID" id="7896494"/>
<dbReference type="KEGG" id="tgo:TGME49_292140"/>
<dbReference type="VEuPathDB" id="ToxoDB:TGME49_292140"/>
<dbReference type="OrthoDB" id="213301at2759"/>
<dbReference type="Proteomes" id="UP000001529">
    <property type="component" value="Chromosome IX"/>
</dbReference>
<dbReference type="GO" id="GO:0005524">
    <property type="term" value="F:ATP binding"/>
    <property type="evidence" value="ECO:0007669"/>
    <property type="project" value="UniProtKB-KW"/>
</dbReference>
<dbReference type="GO" id="GO:0106310">
    <property type="term" value="F:protein serine kinase activity"/>
    <property type="evidence" value="ECO:0007669"/>
    <property type="project" value="RHEA"/>
</dbReference>
<dbReference type="GO" id="GO:0004674">
    <property type="term" value="F:protein serine/threonine kinase activity"/>
    <property type="evidence" value="ECO:0007669"/>
    <property type="project" value="UniProtKB-KW"/>
</dbReference>
<dbReference type="FunFam" id="3.30.200.20:FF:000151">
    <property type="entry name" value="G2-specific protein kinase nimA"/>
    <property type="match status" value="1"/>
</dbReference>
<dbReference type="Gene3D" id="3.30.200.20">
    <property type="entry name" value="Phosphorylase Kinase, domain 1"/>
    <property type="match status" value="1"/>
</dbReference>
<dbReference type="Gene3D" id="1.10.510.10">
    <property type="entry name" value="Transferase(Phosphotransferase) domain 1"/>
    <property type="match status" value="1"/>
</dbReference>
<dbReference type="InterPro" id="IPR011009">
    <property type="entry name" value="Kinase-like_dom_sf"/>
</dbReference>
<dbReference type="InterPro" id="IPR051131">
    <property type="entry name" value="NEK_Ser/Thr_kinase_NIMA"/>
</dbReference>
<dbReference type="InterPro" id="IPR000719">
    <property type="entry name" value="Prot_kinase_dom"/>
</dbReference>
<dbReference type="InterPro" id="IPR008271">
    <property type="entry name" value="Ser/Thr_kinase_AS"/>
</dbReference>
<dbReference type="PANTHER" id="PTHR44899">
    <property type="entry name" value="CAMK FAMILY PROTEIN KINASE"/>
    <property type="match status" value="1"/>
</dbReference>
<dbReference type="PANTHER" id="PTHR44899:SF3">
    <property type="entry name" value="SERINE_THREONINE-PROTEIN KINASE NEK1"/>
    <property type="match status" value="1"/>
</dbReference>
<dbReference type="Pfam" id="PF00069">
    <property type="entry name" value="Pkinase"/>
    <property type="match status" value="1"/>
</dbReference>
<dbReference type="SMART" id="SM00220">
    <property type="entry name" value="S_TKc"/>
    <property type="match status" value="1"/>
</dbReference>
<dbReference type="SUPFAM" id="SSF56112">
    <property type="entry name" value="Protein kinase-like (PK-like)"/>
    <property type="match status" value="1"/>
</dbReference>
<dbReference type="PROSITE" id="PS50011">
    <property type="entry name" value="PROTEIN_KINASE_DOM"/>
    <property type="match status" value="1"/>
</dbReference>
<dbReference type="PROSITE" id="PS00108">
    <property type="entry name" value="PROTEIN_KINASE_ST"/>
    <property type="match status" value="1"/>
</dbReference>
<accession>S8GI44</accession>
<protein>
    <recommendedName>
        <fullName evidence="6">Serine/threonine-protein kinase Nek1</fullName>
        <shortName evidence="5">TgNek1</shortName>
        <ecNumber evidence="7">2.7.11.1</ecNumber>
    </recommendedName>
    <alternativeName>
        <fullName evidence="6">NIMA-related protein kinase NIMA1</fullName>
    </alternativeName>
</protein>
<reference evidence="9" key="1">
    <citation type="submission" date="2013-04" db="EMBL/GenBank/DDBJ databases">
        <authorList>
            <person name="Sibley D."/>
            <person name="Venepally P."/>
            <person name="Karamycheva S."/>
            <person name="Hadjithomas M."/>
            <person name="Khan A."/>
            <person name="Brunk B."/>
            <person name="Roos D."/>
            <person name="Caler E."/>
            <person name="Lorenzi H."/>
        </authorList>
    </citation>
    <scope>NUCLEOTIDE SEQUENCE [LARGE SCALE GENOMIC DNA]</scope>
    <source>
        <strain evidence="9">ATCC 50611 / Me49</strain>
    </source>
</reference>
<reference evidence="6" key="2">
    <citation type="journal article" date="2013" name="J. Cell Sci.">
        <title>The Toxoplasma gondii centrosome is the platform for internal daughter budding as revealed by a Nek1 kinase mutant.</title>
        <authorList>
            <person name="Chen C.T."/>
            <person name="Gubbels M.J."/>
        </authorList>
    </citation>
    <scope>FUNCTION</scope>
    <scope>CATALYTIC ACTIVITY</scope>
    <scope>ACTIVITY REGULATION</scope>
    <scope>SUBCELLULAR LOCATION</scope>
    <scope>ALTERNATIVE SPLICING</scope>
    <scope>ISOFORM TGNEK1-1</scope>
    <scope>ISOFORM TGNEK1-2</scope>
    <scope>DEVELOPMENTAL STAGE</scope>
    <scope>MUTAGENESIS OF LYS-135; SER-278; SER-282; THR-286 AND CYS-319</scope>
</reference>
<reference evidence="6" key="3">
    <citation type="journal article" date="2019" name="Mol. Biol. Cell">
        <title>TgCep250 is dynamically processed through the division cycle and is essential for structural integrity of the Toxoplasma centrosome.</title>
        <authorList>
            <person name="Chen C.T."/>
            <person name="Gubbels M.J."/>
        </authorList>
    </citation>
    <scope>FUNCTION</scope>
    <scope>DISRUPTION PHENOTYPE</scope>
</reference>
<evidence type="ECO:0000255" key="1">
    <source>
        <dbReference type="PROSITE-ProRule" id="PRU00159"/>
    </source>
</evidence>
<evidence type="ECO:0000269" key="2">
    <source>
    </source>
</evidence>
<evidence type="ECO:0000269" key="3">
    <source>
    </source>
</evidence>
<evidence type="ECO:0000303" key="4">
    <source>
    </source>
</evidence>
<evidence type="ECO:0000303" key="5">
    <source>
    </source>
</evidence>
<evidence type="ECO:0000305" key="6"/>
<evidence type="ECO:0000305" key="7">
    <source>
    </source>
</evidence>
<evidence type="ECO:0000312" key="8">
    <source>
        <dbReference type="EMBL" id="EPT28124.1"/>
    </source>
</evidence>
<evidence type="ECO:0000312" key="9">
    <source>
        <dbReference type="Proteomes" id="UP000001529"/>
    </source>
</evidence>
<proteinExistence type="evidence at protein level"/>
<feature type="chain" id="PRO_0000462294" description="Serine/threonine-protein kinase Nek1">
    <location>
        <begin position="1"/>
        <end position="1598"/>
    </location>
</feature>
<feature type="domain" description="Protein kinase" evidence="1">
    <location>
        <begin position="106"/>
        <end position="380"/>
    </location>
</feature>
<feature type="active site" description="Proton acceptor" evidence="1">
    <location>
        <position position="240"/>
    </location>
</feature>
<feature type="binding site" evidence="1">
    <location>
        <begin position="112"/>
        <end position="120"/>
    </location>
    <ligand>
        <name>ATP</name>
        <dbReference type="ChEBI" id="CHEBI:30616"/>
    </ligand>
</feature>
<feature type="binding site" evidence="1">
    <location>
        <position position="135"/>
    </location>
    <ligand>
        <name>ATP</name>
        <dbReference type="ChEBI" id="CHEBI:30616"/>
    </ligand>
</feature>
<feature type="site" description="Putative phosphorylation site" evidence="4">
    <location>
        <position position="278"/>
    </location>
</feature>
<feature type="site" description="Putative phosphorylation site" evidence="4">
    <location>
        <position position="282"/>
    </location>
</feature>
<feature type="site" description="Putative phosphorylation site" evidence="4">
    <location>
        <position position="286"/>
    </location>
</feature>
<feature type="splice variant" id="VSP_062546" description="In isoform TgNek1-1." evidence="2">
    <original>SAPSWTPRNASPARGSPSSAVSTVSTVTTSPGSSSRTSFSAPSSHDAAASSPAS</original>
    <variation>SLSFAPFSRFLFVVDATHGRGFACAGTSRANCLRAEREARAWMSGIKGKSSLLG</variation>
    <location>
        <begin position="395"/>
        <end position="448"/>
    </location>
</feature>
<feature type="splice variant" id="VSP_062547" description="In isoform TgNek1-1." evidence="2">
    <location>
        <begin position="449"/>
        <end position="1598"/>
    </location>
</feature>
<feature type="splice variant" id="VSP_062548" description="In isoform TgNek1-2." evidence="2">
    <original>SYSSDSAGPSGASAPSQKAPGPGRPPETPSRESFDLAS</original>
    <variation>FVFVFAKIRRPAFSRSTGGESLPEAWRDKSVSRLCAER</variation>
    <location>
        <begin position="462"/>
        <end position="499"/>
    </location>
</feature>
<feature type="splice variant" id="VSP_062549" description="In isoform TgNek1-2." evidence="2">
    <location>
        <begin position="500"/>
        <end position="1598"/>
    </location>
</feature>
<feature type="mutagenesis site" description="Abolishes kinase activity. Leads to loss of protein localization at the centrosome and spindle pole." evidence="2">
    <original>K</original>
    <variation>M</variation>
    <location>
        <position position="135"/>
    </location>
</feature>
<feature type="mutagenesis site" description="Abolishes kinase activity; when associated with A-282 and A-286. Does not affect subcellular localization of the protein; when associated with A-282 and A-286." evidence="2">
    <original>S</original>
    <variation>A</variation>
    <location>
        <position position="278"/>
    </location>
</feature>
<feature type="mutagenesis site" description="Abolishes kinase activity; when associated with A-278 and A-286. Does not affect subcellular localization of the protein; when associated with A-278 and A-286." evidence="2">
    <original>S</original>
    <variation>A</variation>
    <location>
        <position position="282"/>
    </location>
</feature>
<feature type="mutagenesis site" description="Abolishes kinase activity; when associated with A-278 and A-282. Does not affect subcellular localization of the protein; when associated with A-278 and A-282." evidence="2">
    <original>T</original>
    <variation>A</variation>
    <location>
        <position position="286"/>
    </location>
</feature>
<feature type="mutagenesis site" description="Abolishes kinase activity." evidence="2">
    <original>C</original>
    <variation>R</variation>
    <location>
        <position position="319"/>
    </location>
</feature>
<comment type="function">
    <text evidence="2 3 7">Probable serine/threonine-protein kinase (Probable). Involved in controlling centrosome splitting (PubMed:23729737). Promotes separation of the centrosome outer cores (PubMed:30865554).</text>
</comment>
<comment type="catalytic activity">
    <reaction evidence="7">
        <text>L-seryl-[protein] + ATP = O-phospho-L-seryl-[protein] + ADP + H(+)</text>
        <dbReference type="Rhea" id="RHEA:17989"/>
        <dbReference type="Rhea" id="RHEA-COMP:9863"/>
        <dbReference type="Rhea" id="RHEA-COMP:11604"/>
        <dbReference type="ChEBI" id="CHEBI:15378"/>
        <dbReference type="ChEBI" id="CHEBI:29999"/>
        <dbReference type="ChEBI" id="CHEBI:30616"/>
        <dbReference type="ChEBI" id="CHEBI:83421"/>
        <dbReference type="ChEBI" id="CHEBI:456216"/>
        <dbReference type="EC" id="2.7.11.1"/>
    </reaction>
</comment>
<comment type="catalytic activity">
    <reaction evidence="7">
        <text>L-threonyl-[protein] + ATP = O-phospho-L-threonyl-[protein] + ADP + H(+)</text>
        <dbReference type="Rhea" id="RHEA:46608"/>
        <dbReference type="Rhea" id="RHEA-COMP:11060"/>
        <dbReference type="Rhea" id="RHEA-COMP:11605"/>
        <dbReference type="ChEBI" id="CHEBI:15378"/>
        <dbReference type="ChEBI" id="CHEBI:30013"/>
        <dbReference type="ChEBI" id="CHEBI:30616"/>
        <dbReference type="ChEBI" id="CHEBI:61977"/>
        <dbReference type="ChEBI" id="CHEBI:456216"/>
        <dbReference type="EC" id="2.7.11.1"/>
    </reaction>
</comment>
<comment type="activity regulation">
    <text evidence="2">Phosphorylation status of the T-loop (amino acids 267-293) modulates kinase activity and subcellular localization of the protein.</text>
</comment>
<comment type="subcellular location">
    <subcellularLocation>
        <location evidence="2">Cytoplasm</location>
        <location evidence="2">Cytoskeleton</location>
        <location evidence="2">Microtubule organizing center</location>
        <location evidence="2">Centrosome</location>
    </subcellularLocation>
    <subcellularLocation>
        <location evidence="2">Cytoplasm</location>
        <location evidence="2">Cytoskeleton</location>
        <location evidence="2">Spindle pole</location>
    </subcellularLocation>
    <text evidence="2">Localizes only to a small portion of the centrosome, on the inner side of duplicated centrosomes (PubMed:23729737). Localizes to the space between centrosome and spindle pole throughout the transition from S phase to mitosis (PubMed:23729737).</text>
</comment>
<comment type="alternative products">
    <event type="alternative splicing"/>
    <isoform>
        <id>S8GI44-1</id>
        <name>TgNek1</name>
        <sequence type="displayed"/>
    </isoform>
    <isoform>
        <id>S8GI44-2</id>
        <name evidence="4">TgNek1-1</name>
        <sequence type="described" ref="VSP_062546 VSP_062547"/>
    </isoform>
    <isoform>
        <id>S8GI44-3</id>
        <name evidence="4">TgNek1-2</name>
        <sequence type="described" ref="VSP_062548 VSP_062549"/>
    </isoform>
</comment>
<comment type="developmental stage">
    <text evidence="2">Expressed in intracellular replicating parasites (at protein level).</text>
</comment>
<comment type="disruption phenotype">
    <text evidence="3">Conditional knockdown results in severe growth defects (PubMed:30865554). Defects in centrosome outer core separation (PubMed:30865554). No significant effects on the centrosome inner core splitting (PubMed:30865554).</text>
</comment>
<comment type="similarity">
    <text evidence="6">Belongs to the protein kinase superfamily. NEK Ser/Thr protein kinase family. NIMA subfamily.</text>
</comment>
<comment type="caution">
    <text evidence="2">In RACE PCR experiments, two different splice variants were identified at the 3'-end of the gene, both of which differ from the available gene models (PubMed:23729737). Identified variants encode polypeptides of 448 (TgNek1-1) and 499 (TgNek1-2) amino acids, respectively (PubMed:23729737).</text>
</comment>
<keyword id="KW-0025">Alternative splicing</keyword>
<keyword id="KW-0067">ATP-binding</keyword>
<keyword id="KW-0131">Cell cycle</keyword>
<keyword id="KW-0132">Cell division</keyword>
<keyword id="KW-0963">Cytoplasm</keyword>
<keyword id="KW-0206">Cytoskeleton</keyword>
<keyword id="KW-0418">Kinase</keyword>
<keyword id="KW-0547">Nucleotide-binding</keyword>
<keyword id="KW-1185">Reference proteome</keyword>
<keyword id="KW-0723">Serine/threonine-protein kinase</keyword>
<keyword id="KW-0808">Transferase</keyword>
<gene>
    <name evidence="8" type="primary">NEK</name>
    <name evidence="8" type="ORF">TGME49_292140</name>
</gene>
<organism evidence="9">
    <name type="scientific">Toxoplasma gondii (strain ATCC 50611 / Me49)</name>
    <dbReference type="NCBI Taxonomy" id="508771"/>
    <lineage>
        <taxon>Eukaryota</taxon>
        <taxon>Sar</taxon>
        <taxon>Alveolata</taxon>
        <taxon>Apicomplexa</taxon>
        <taxon>Conoidasida</taxon>
        <taxon>Coccidia</taxon>
        <taxon>Eucoccidiorida</taxon>
        <taxon>Eimeriorina</taxon>
        <taxon>Sarcocystidae</taxon>
        <taxon>Toxoplasma</taxon>
    </lineage>
</organism>
<sequence length="1598" mass="170135">MEQFGGPSGFMPPASYTAPLGKYPTKQPSAAYPSDGGRHATKENPRPAEGQASRQSSSVPSAMASKPIQDPEGHSAQPTSSYCRAQTPRSTPLPVALDEEARLSQYEVIRQIGAGRFGEVFIIRHKATKALLCWKLVFYKGLREKEKKQLVSEVNVMRELRHANIVRYHDRIVCRSRQCLYIVMEYCDAGDLAKQIEAAHKHHGGIDQDRIVLVVVQLIHALAYCHEGVGQERRRVLHRDLKPCNIFLASHPEYPDDSSRCIAKLGDFGLSRHLNMHSMAHSCVGTPYYWSPELLEDGQKTYNVKSDMWALGCVIYEMCTGKTPFAQAQTMPQLKERVRCGPVLPVPGFSDSLNALMASLLQPNPNNRPSALQCLGYTIFRGCSYTPPPLYRSSSAPSWTPRNASPARGSPSSAVSTVSTVTTSPGSSSRTSFSAPSSHDAAASSPASASASSRYQHQRSSSYSSDSAGPSGASAPSQKAPGPGRPPETPSRESFDLASKARPGFFAEAPPPHAFAEASPPESHASEFLPPANGAANEARNERTQRDRTRRAASATAAAAVSAFERQQREGRSMSPDPSAPLASIEEEEEGEGDDAGCGSLGSGSGVTRRMPGASLNREDRREAPGLRHADTHKRDDRDGAIWTGRREEAPFSRPGSELARDFGAASQNKVDTSRFSGASSGKPRPGNPQNEDRASFASDTSARQTVYLSGLSRRCSEPPAAFHSAVSPWDPAPPRLSSAASSSSSSRAVSPSSLRRASSREMKYPTDDRPAVAAGSSGVALARAERGPEPGAPWGNEETEGLHVHGRPSAAPASSFSSERTSRPGHPDEARESEHCFQGRGRFAEAEASPATEGKDPRDSGFEERSGRRDEGRTDGGEAQSFGYWPNGRSDEARDRLGAPSVSPFSSKRITRRSSTAAGLSTYASPSDPAPSARAPAEWRRGAAGSSTVSAAGACGRFLPSPRSWQGNEKSFPSSSDHPSAYPALPHPAAPAYPEPGAQASNQFPRRRQSAFPSVKRLDYEEEHASSACLPTLLSPRFPHHPVSRPAGGVSPRSSQRQALAPTLAGMTFERRLSAGPLSSAPFSAPQERTTRLVGHRHALAADAERAEAPFSHAFRPGHHDRTPVGARRVPPRAETPGVSLDPGFRTGGPLDRGPVGSGGLEGQSFDFAHPTHASSEKKEAETEWSNPTAPVFYSPRSPRNDLPPGDGARSPYSAHLRPGVSEACSSFSVPPTERYEDDKNSHHAGSGGAFSPPTFGSPTPGPVPVGNERTFGRNPSPAATCASFSAKTGLRTPAPNGLAGDSGAFRSTNSLQRTPMSRRVSAPFGAGSAEGATAFGSRYASSGSFSKKFPQGSSSGVHEGGGAFGRRQEGDVSRVDAHGSVSPRSFSFLQRSDAPLSRGQPEGSHFQKHGETRASPDFARKGDSTQTHASGGRDFSQSGPFETQDFTFGEQPTRETRHMAPSPRGIERGGPQGSFVGHDTSFSVYAPRAGHAEGVESGCSAFEAPSESLSRRDGEADRENTVPNANGQMPVSGMPASKQTYGDDCDLYDNSAWTAQKHAPENFHAAVAPYPSSLLTGFAEGQQKAASRSSCLGGDR</sequence>
<name>NEK_TOXGM</name>